<name>CLCL_RALN1</name>
<reference key="1">
    <citation type="journal article" date="2002" name="Nature">
        <title>Genome sequence of the plant pathogen Ralstonia solanacearum.</title>
        <authorList>
            <person name="Salanoubat M."/>
            <person name="Genin S."/>
            <person name="Artiguenave F."/>
            <person name="Gouzy J."/>
            <person name="Mangenot S."/>
            <person name="Arlat M."/>
            <person name="Billault A."/>
            <person name="Brottier P."/>
            <person name="Camus J.-C."/>
            <person name="Cattolico L."/>
            <person name="Chandler M."/>
            <person name="Choisne N."/>
            <person name="Claudel-Renard C."/>
            <person name="Cunnac S."/>
            <person name="Demange N."/>
            <person name="Gaspin C."/>
            <person name="Lavie M."/>
            <person name="Moisan A."/>
            <person name="Robert C."/>
            <person name="Saurin W."/>
            <person name="Schiex T."/>
            <person name="Siguier P."/>
            <person name="Thebault P."/>
            <person name="Whalen M."/>
            <person name="Wincker P."/>
            <person name="Levy M."/>
            <person name="Weissenbach J."/>
            <person name="Boucher C.A."/>
        </authorList>
    </citation>
    <scope>NUCLEOTIDE SEQUENCE [LARGE SCALE GENOMIC DNA]</scope>
    <source>
        <strain>ATCC BAA-1114 / GMI1000</strain>
    </source>
</reference>
<comment type="subcellular location">
    <subcellularLocation>
        <location evidence="1">Cell inner membrane</location>
        <topology evidence="1">Multi-pass membrane protein</topology>
    </subcellularLocation>
</comment>
<comment type="similarity">
    <text evidence="3">Belongs to the chloride channel (TC 2.A.49) family. ClcB subfamily.</text>
</comment>
<comment type="sequence caution" evidence="3">
    <conflict type="erroneous initiation">
        <sequence resource="EMBL-CDS" id="CAD17171"/>
    </conflict>
</comment>
<dbReference type="EMBL" id="AL646053">
    <property type="protein sequence ID" value="CAD17171.1"/>
    <property type="status" value="ALT_INIT"/>
    <property type="molecule type" value="Genomic_DNA"/>
</dbReference>
<dbReference type="SMR" id="Q8XTT4"/>
<dbReference type="STRING" id="267608.RSp0020"/>
<dbReference type="EnsemblBacteria" id="CAD17171">
    <property type="protein sequence ID" value="CAD17171"/>
    <property type="gene ID" value="RSp0020"/>
</dbReference>
<dbReference type="KEGG" id="rso:RSp0020"/>
<dbReference type="eggNOG" id="COG0038">
    <property type="taxonomic scope" value="Bacteria"/>
</dbReference>
<dbReference type="HOGENOM" id="CLU_015263_5_2_4"/>
<dbReference type="Proteomes" id="UP000001436">
    <property type="component" value="Plasmid megaplasmid Rsp"/>
</dbReference>
<dbReference type="GO" id="GO:0034707">
    <property type="term" value="C:chloride channel complex"/>
    <property type="evidence" value="ECO:0007669"/>
    <property type="project" value="UniProtKB-KW"/>
</dbReference>
<dbReference type="GO" id="GO:0005886">
    <property type="term" value="C:plasma membrane"/>
    <property type="evidence" value="ECO:0007669"/>
    <property type="project" value="UniProtKB-SubCell"/>
</dbReference>
<dbReference type="GO" id="GO:0005247">
    <property type="term" value="F:voltage-gated chloride channel activity"/>
    <property type="evidence" value="ECO:0007669"/>
    <property type="project" value="UniProtKB-UniRule"/>
</dbReference>
<dbReference type="GO" id="GO:0010447">
    <property type="term" value="P:response to acidic pH"/>
    <property type="evidence" value="ECO:0007669"/>
    <property type="project" value="InterPro"/>
</dbReference>
<dbReference type="CDD" id="cd00400">
    <property type="entry name" value="Voltage_gated_ClC"/>
    <property type="match status" value="1"/>
</dbReference>
<dbReference type="Gene3D" id="1.10.3080.10">
    <property type="entry name" value="Clc chloride channel"/>
    <property type="match status" value="1"/>
</dbReference>
<dbReference type="HAMAP" id="MF_01203">
    <property type="entry name" value="CLC_ClcB"/>
    <property type="match status" value="1"/>
</dbReference>
<dbReference type="InterPro" id="IPR014743">
    <property type="entry name" value="Cl-channel_core"/>
</dbReference>
<dbReference type="InterPro" id="IPR023790">
    <property type="entry name" value="Cl-channel_volt-gated_ClcB"/>
</dbReference>
<dbReference type="InterPro" id="IPR001807">
    <property type="entry name" value="ClC"/>
</dbReference>
<dbReference type="InterPro" id="IPR050368">
    <property type="entry name" value="ClC-type_chloride_channel"/>
</dbReference>
<dbReference type="NCBIfam" id="NF002505">
    <property type="entry name" value="PRK01862.1"/>
    <property type="match status" value="1"/>
</dbReference>
<dbReference type="PANTHER" id="PTHR43427">
    <property type="entry name" value="CHLORIDE CHANNEL PROTEIN CLC-E"/>
    <property type="match status" value="1"/>
</dbReference>
<dbReference type="PANTHER" id="PTHR43427:SF6">
    <property type="entry name" value="CHLORIDE CHANNEL PROTEIN CLC-E"/>
    <property type="match status" value="1"/>
</dbReference>
<dbReference type="Pfam" id="PF00654">
    <property type="entry name" value="Voltage_CLC"/>
    <property type="match status" value="1"/>
</dbReference>
<dbReference type="PRINTS" id="PR00762">
    <property type="entry name" value="CLCHANNEL"/>
</dbReference>
<dbReference type="SUPFAM" id="SSF81340">
    <property type="entry name" value="Clc chloride channel"/>
    <property type="match status" value="1"/>
</dbReference>
<organism>
    <name type="scientific">Ralstonia nicotianae (strain ATCC BAA-1114 / GMI1000)</name>
    <name type="common">Ralstonia solanacearum</name>
    <dbReference type="NCBI Taxonomy" id="267608"/>
    <lineage>
        <taxon>Bacteria</taxon>
        <taxon>Pseudomonadati</taxon>
        <taxon>Pseudomonadota</taxon>
        <taxon>Betaproteobacteria</taxon>
        <taxon>Burkholderiales</taxon>
        <taxon>Burkholderiaceae</taxon>
        <taxon>Ralstonia</taxon>
        <taxon>Ralstonia solanacearum species complex</taxon>
    </lineage>
</organism>
<geneLocation type="plasmid">
    <name>megaplasmid Rsp</name>
</geneLocation>
<feature type="chain" id="PRO_0000094493" description="Putative chloride channel protein ClcB-like">
    <location>
        <begin position="1"/>
        <end position="429"/>
    </location>
</feature>
<feature type="transmembrane region" description="Helical" evidence="2">
    <location>
        <begin position="1"/>
        <end position="21"/>
    </location>
</feature>
<feature type="transmembrane region" description="Helical" evidence="2">
    <location>
        <begin position="44"/>
        <end position="64"/>
    </location>
</feature>
<feature type="transmembrane region" description="Helical" evidence="2">
    <location>
        <begin position="146"/>
        <end position="166"/>
    </location>
</feature>
<feature type="transmembrane region" description="Helical" evidence="2">
    <location>
        <begin position="168"/>
        <end position="188"/>
    </location>
</feature>
<feature type="transmembrane region" description="Helical" evidence="2">
    <location>
        <begin position="200"/>
        <end position="220"/>
    </location>
</feature>
<feature type="transmembrane region" description="Helical" evidence="2">
    <location>
        <begin position="221"/>
        <end position="241"/>
    </location>
</feature>
<feature type="transmembrane region" description="Helical" evidence="2">
    <location>
        <begin position="259"/>
        <end position="279"/>
    </location>
</feature>
<feature type="transmembrane region" description="Helical" evidence="2">
    <location>
        <begin position="283"/>
        <end position="303"/>
    </location>
</feature>
<feature type="transmembrane region" description="Helical" evidence="2">
    <location>
        <begin position="315"/>
        <end position="335"/>
    </location>
</feature>
<feature type="transmembrane region" description="Helical" evidence="2">
    <location>
        <begin position="354"/>
        <end position="376"/>
    </location>
</feature>
<feature type="transmembrane region" description="Helical" evidence="2">
    <location>
        <begin position="383"/>
        <end position="405"/>
    </location>
</feature>
<evidence type="ECO:0000250" key="1"/>
<evidence type="ECO:0000255" key="2"/>
<evidence type="ECO:0000305" key="3"/>
<sequence>MLAIAGLIGCAGALATIAFRECLRQLQWWLAGADQGLVATARALPWWARLLVPTAGGLLAGLTLQYGLKWIPRKGAEDYMEAIAVGDGVLSARQSLVRSASSLCSVASGASIGREGPMVQLAAMCGSLLGRVLRHAMPVSVEHMRLLVACGAAAGITSAYNAPIAGAVFVCEIVFGAITTATLGPLLVSAVTADIIVRQFFGYGAVYAMPHFDFVSGWEVLTYLGLGLAAGMAGPLLLGLIDRARGAFARTRLPQALRLALGGLIVGALSIRVPEVWGNGYSVVNGFLHAPWLWQTVALVLVCKVGATAASAGSGAVGGVFTPTLFCGAALGLLYGTGMHALLPGAAPVPVSYAVVGMGALLAATTHAPLMSILMIFEMTLSYQVVLPLMLACITGYVTAHATGAPSVYARALARNRDDTLRLPPASSP</sequence>
<protein>
    <recommendedName>
        <fullName>Putative chloride channel protein ClcB-like</fullName>
    </recommendedName>
</protein>
<accession>Q8XTT4</accession>
<proteinExistence type="inferred from homology"/>
<keyword id="KW-0997">Cell inner membrane</keyword>
<keyword id="KW-1003">Cell membrane</keyword>
<keyword id="KW-0868">Chloride</keyword>
<keyword id="KW-0869">Chloride channel</keyword>
<keyword id="KW-0407">Ion channel</keyword>
<keyword id="KW-0406">Ion transport</keyword>
<keyword id="KW-0472">Membrane</keyword>
<keyword id="KW-0614">Plasmid</keyword>
<keyword id="KW-1185">Reference proteome</keyword>
<keyword id="KW-0812">Transmembrane</keyword>
<keyword id="KW-1133">Transmembrane helix</keyword>
<keyword id="KW-0813">Transport</keyword>
<keyword id="KW-0851">Voltage-gated channel</keyword>
<gene>
    <name type="ordered locus">RSp0020</name>
    <name type="ORF">RS01992</name>
</gene>